<feature type="chain" id="PRO_1000025554" description="Phosphoenolpyruvate carboxylase">
    <location>
        <begin position="1"/>
        <end position="994"/>
    </location>
</feature>
<feature type="region of interest" description="Disordered" evidence="2">
    <location>
        <begin position="1"/>
        <end position="67"/>
    </location>
</feature>
<feature type="compositionally biased region" description="Low complexity" evidence="2">
    <location>
        <begin position="9"/>
        <end position="24"/>
    </location>
</feature>
<feature type="compositionally biased region" description="Low complexity" evidence="2">
    <location>
        <begin position="34"/>
        <end position="57"/>
    </location>
</feature>
<feature type="active site" evidence="1">
    <location>
        <position position="204"/>
    </location>
</feature>
<feature type="active site" evidence="1">
    <location>
        <position position="646"/>
    </location>
</feature>
<comment type="function">
    <text evidence="1">Forms oxaloacetate, a four-carbon dicarboxylic acid source for the tricarboxylic acid cycle.</text>
</comment>
<comment type="catalytic activity">
    <reaction evidence="1">
        <text>oxaloacetate + phosphate = phosphoenolpyruvate + hydrogencarbonate</text>
        <dbReference type="Rhea" id="RHEA:28370"/>
        <dbReference type="ChEBI" id="CHEBI:16452"/>
        <dbReference type="ChEBI" id="CHEBI:17544"/>
        <dbReference type="ChEBI" id="CHEBI:43474"/>
        <dbReference type="ChEBI" id="CHEBI:58702"/>
        <dbReference type="EC" id="4.1.1.31"/>
    </reaction>
</comment>
<comment type="cofactor">
    <cofactor evidence="1">
        <name>Mg(2+)</name>
        <dbReference type="ChEBI" id="CHEBI:18420"/>
    </cofactor>
</comment>
<comment type="similarity">
    <text evidence="1">Belongs to the PEPCase type 1 family.</text>
</comment>
<sequence>MKAVRSDKTTQAATTAQAQKPAKAGSSKIKIVTAAPQAANASARQPASAQAPAPKANGRTREDKDHPLFQDIRYLGRLLGDVLREQEGDAVFDVVETIRQTAVRFRREDDSAAAQTLDKKLRSLSPEQTVSVVRAFSYFSHLANIAEDRHRNRRHRIHELAGSTSQPGTIAHSLERLVEAGAAATPVLQEFFNNALIVPVLTAHPTEVQRKSILDAQHDVARLLAERDQQLTDRERAHNEAMLRARVTSLWQTRMLRDSRLSVADEIENALSYYRATFLEEIPALYADIEEALAEHGLEARLPPFFQMGSWIGGDRDGNPNVTAETLENAITRQAAVIFEHYMEQVHKLGAELSVSNLLAGASDALKELAAVSPDQSPHRTDEPYRRALIGMYTRLAASARVRLGEGSVPVRSAGRGAAPVRAKPYADSAEFVRDLHVLIDSLAEHHGAPLAAPRLSPLARAAEVFGFHLASIDLRQSSDVHEAVITELLRRAGVEENYAELPEADKLNVLLSELAQPRPLRLPFAEYSDLVKSELGVLEEARVTREKFGARAVRNYIISHTETVSDLVEVMLLQKETGLLRGCLGNANDPAQAGLMVIPLFETIPDLRNAPHIMRDLIALPGVDALIEHQGNEQEVMLGYSDSNKDGGFLTSNWELYRAELALVSLFNERGVTLRLFHGRGGTVGRGGGPTYQAILSQPPGTVDGQIRLTEQGEVIASKFGNPEIGRRNLETVVAATLEASLLPHGIAPAQLPAFEETMQQLSDAAMASYRALVYETPGFKEYFFESTPISEIAELNIGSRPASRKLQDPKQRKIEDLRAIPWGFSWGQCRLLLTGWYGFGSAVAAHLDSAPSDAERTRRLALLKKMHKTWPFFANLLSNMDMVLAKTDLAVASRYAALVSDKKLRKHVFERIVAEWERTSKVLSEITGKSERLAENPLLARSIKNRFPYLDPLNHLQVELLKRHRAGDTNARVRRGIHLSINGIAAGLRNTG</sequence>
<reference key="1">
    <citation type="journal article" date="2006" name="Proc. Natl. Acad. Sci. U.S.A.">
        <title>Burkholderia xenovorans LB400 harbors a multi-replicon, 9.73-Mbp genome shaped for versatility.</title>
        <authorList>
            <person name="Chain P.S.G."/>
            <person name="Denef V.J."/>
            <person name="Konstantinidis K.T."/>
            <person name="Vergez L.M."/>
            <person name="Agullo L."/>
            <person name="Reyes V.L."/>
            <person name="Hauser L."/>
            <person name="Cordova M."/>
            <person name="Gomez L."/>
            <person name="Gonzalez M."/>
            <person name="Land M."/>
            <person name="Lao V."/>
            <person name="Larimer F."/>
            <person name="LiPuma J.J."/>
            <person name="Mahenthiralingam E."/>
            <person name="Malfatti S.A."/>
            <person name="Marx C.J."/>
            <person name="Parnell J.J."/>
            <person name="Ramette A."/>
            <person name="Richardson P."/>
            <person name="Seeger M."/>
            <person name="Smith D."/>
            <person name="Spilker T."/>
            <person name="Sul W.J."/>
            <person name="Tsoi T.V."/>
            <person name="Ulrich L.E."/>
            <person name="Zhulin I.B."/>
            <person name="Tiedje J.M."/>
        </authorList>
    </citation>
    <scope>NUCLEOTIDE SEQUENCE [LARGE SCALE GENOMIC DNA]</scope>
    <source>
        <strain>LB400</strain>
    </source>
</reference>
<name>CAPP_PARXL</name>
<evidence type="ECO:0000255" key="1">
    <source>
        <dbReference type="HAMAP-Rule" id="MF_00595"/>
    </source>
</evidence>
<evidence type="ECO:0000256" key="2">
    <source>
        <dbReference type="SAM" id="MobiDB-lite"/>
    </source>
</evidence>
<proteinExistence type="inferred from homology"/>
<keyword id="KW-0120">Carbon dioxide fixation</keyword>
<keyword id="KW-0456">Lyase</keyword>
<keyword id="KW-0460">Magnesium</keyword>
<keyword id="KW-1185">Reference proteome</keyword>
<gene>
    <name evidence="1" type="primary">ppc</name>
    <name type="ordered locus">Bxeno_A1035</name>
    <name type="ORF">Bxe_A3412</name>
</gene>
<protein>
    <recommendedName>
        <fullName evidence="1">Phosphoenolpyruvate carboxylase</fullName>
        <shortName evidence="1">PEPC</shortName>
        <shortName evidence="1">PEPCase</shortName>
        <ecNumber evidence="1">4.1.1.31</ecNumber>
    </recommendedName>
</protein>
<organism>
    <name type="scientific">Paraburkholderia xenovorans (strain LB400)</name>
    <dbReference type="NCBI Taxonomy" id="266265"/>
    <lineage>
        <taxon>Bacteria</taxon>
        <taxon>Pseudomonadati</taxon>
        <taxon>Pseudomonadota</taxon>
        <taxon>Betaproteobacteria</taxon>
        <taxon>Burkholderiales</taxon>
        <taxon>Burkholderiaceae</taxon>
        <taxon>Paraburkholderia</taxon>
    </lineage>
</organism>
<dbReference type="EC" id="4.1.1.31" evidence="1"/>
<dbReference type="EMBL" id="CP000270">
    <property type="protein sequence ID" value="ABE29573.1"/>
    <property type="molecule type" value="Genomic_DNA"/>
</dbReference>
<dbReference type="SMR" id="Q143B6"/>
<dbReference type="STRING" id="266265.Bxe_A3412"/>
<dbReference type="KEGG" id="bxe:Bxe_A3412"/>
<dbReference type="eggNOG" id="COG2352">
    <property type="taxonomic scope" value="Bacteria"/>
</dbReference>
<dbReference type="Proteomes" id="UP000001817">
    <property type="component" value="Chromosome 1"/>
</dbReference>
<dbReference type="GO" id="GO:0005829">
    <property type="term" value="C:cytosol"/>
    <property type="evidence" value="ECO:0007669"/>
    <property type="project" value="TreeGrafter"/>
</dbReference>
<dbReference type="GO" id="GO:0000287">
    <property type="term" value="F:magnesium ion binding"/>
    <property type="evidence" value="ECO:0007669"/>
    <property type="project" value="UniProtKB-UniRule"/>
</dbReference>
<dbReference type="GO" id="GO:0008964">
    <property type="term" value="F:phosphoenolpyruvate carboxylase activity"/>
    <property type="evidence" value="ECO:0007669"/>
    <property type="project" value="UniProtKB-UniRule"/>
</dbReference>
<dbReference type="GO" id="GO:0015977">
    <property type="term" value="P:carbon fixation"/>
    <property type="evidence" value="ECO:0007669"/>
    <property type="project" value="UniProtKB-UniRule"/>
</dbReference>
<dbReference type="GO" id="GO:0006107">
    <property type="term" value="P:oxaloacetate metabolic process"/>
    <property type="evidence" value="ECO:0007669"/>
    <property type="project" value="UniProtKB-UniRule"/>
</dbReference>
<dbReference type="GO" id="GO:0006099">
    <property type="term" value="P:tricarboxylic acid cycle"/>
    <property type="evidence" value="ECO:0007669"/>
    <property type="project" value="InterPro"/>
</dbReference>
<dbReference type="Gene3D" id="1.20.1440.90">
    <property type="entry name" value="Phosphoenolpyruvate/pyruvate domain"/>
    <property type="match status" value="1"/>
</dbReference>
<dbReference type="HAMAP" id="MF_00595">
    <property type="entry name" value="PEPcase_type1"/>
    <property type="match status" value="1"/>
</dbReference>
<dbReference type="InterPro" id="IPR021135">
    <property type="entry name" value="PEP_COase"/>
</dbReference>
<dbReference type="InterPro" id="IPR022805">
    <property type="entry name" value="PEP_COase_bac/pln-type"/>
</dbReference>
<dbReference type="InterPro" id="IPR018129">
    <property type="entry name" value="PEP_COase_Lys_AS"/>
</dbReference>
<dbReference type="InterPro" id="IPR033129">
    <property type="entry name" value="PEPCASE_His_AS"/>
</dbReference>
<dbReference type="InterPro" id="IPR015813">
    <property type="entry name" value="Pyrv/PenolPyrv_kinase-like_dom"/>
</dbReference>
<dbReference type="NCBIfam" id="NF000584">
    <property type="entry name" value="PRK00009.1"/>
    <property type="match status" value="1"/>
</dbReference>
<dbReference type="PANTHER" id="PTHR30523">
    <property type="entry name" value="PHOSPHOENOLPYRUVATE CARBOXYLASE"/>
    <property type="match status" value="1"/>
</dbReference>
<dbReference type="PANTHER" id="PTHR30523:SF6">
    <property type="entry name" value="PHOSPHOENOLPYRUVATE CARBOXYLASE"/>
    <property type="match status" value="1"/>
</dbReference>
<dbReference type="Pfam" id="PF00311">
    <property type="entry name" value="PEPcase"/>
    <property type="match status" value="1"/>
</dbReference>
<dbReference type="PRINTS" id="PR00150">
    <property type="entry name" value="PEPCARBXLASE"/>
</dbReference>
<dbReference type="SUPFAM" id="SSF51621">
    <property type="entry name" value="Phosphoenolpyruvate/pyruvate domain"/>
    <property type="match status" value="1"/>
</dbReference>
<dbReference type="PROSITE" id="PS00781">
    <property type="entry name" value="PEPCASE_1"/>
    <property type="match status" value="1"/>
</dbReference>
<dbReference type="PROSITE" id="PS00393">
    <property type="entry name" value="PEPCASE_2"/>
    <property type="match status" value="1"/>
</dbReference>
<accession>Q143B6</accession>